<proteinExistence type="inferred from homology"/>
<organism>
    <name type="scientific">Ureaplasma parvum serovar 3 (strain ATCC 27815 / 27 / NCTC 11736)</name>
    <dbReference type="NCBI Taxonomy" id="505682"/>
    <lineage>
        <taxon>Bacteria</taxon>
        <taxon>Bacillati</taxon>
        <taxon>Mycoplasmatota</taxon>
        <taxon>Mycoplasmoidales</taxon>
        <taxon>Mycoplasmoidaceae</taxon>
        <taxon>Ureaplasma</taxon>
    </lineage>
</organism>
<accession>B1AJJ4</accession>
<sequence>MAKYEIMLVVRGDLDQEQANKVANELKATLKNTEVKENNYDGVQQLAYEINKLKTAYRYVYNFETTDVSLINEFRRLAIINKNVLRHIIINLEKDYGYKATVNTKKVQRNEKRAEVYARQKEEAERRAVERQAAYEAMKAEREAAGLPVKEFVKNTNSKR</sequence>
<keyword id="KW-0687">Ribonucleoprotein</keyword>
<keyword id="KW-0689">Ribosomal protein</keyword>
<keyword id="KW-0694">RNA-binding</keyword>
<keyword id="KW-0699">rRNA-binding</keyword>
<reference key="1">
    <citation type="submission" date="2008-02" db="EMBL/GenBank/DDBJ databases">
        <title>Genome sequence of Ureaplasma parvum serovar 3.</title>
        <authorList>
            <person name="Methe B.A."/>
            <person name="Glass J."/>
            <person name="Waites K."/>
            <person name="Shrivastava S."/>
        </authorList>
    </citation>
    <scope>NUCLEOTIDE SEQUENCE [LARGE SCALE GENOMIC DNA]</scope>
    <source>
        <strain>ATCC 27815 / 27 / NCTC 11736</strain>
    </source>
</reference>
<dbReference type="EMBL" id="CP000942">
    <property type="protein sequence ID" value="ACA33063.1"/>
    <property type="molecule type" value="Genomic_DNA"/>
</dbReference>
<dbReference type="RefSeq" id="WP_006688782.1">
    <property type="nucleotide sequence ID" value="NC_010503.1"/>
</dbReference>
<dbReference type="SMR" id="B1AJJ4"/>
<dbReference type="GeneID" id="29672549"/>
<dbReference type="KEGG" id="upa:UPA3_0591"/>
<dbReference type="HOGENOM" id="CLU_139827_0_0_14"/>
<dbReference type="Proteomes" id="UP000002162">
    <property type="component" value="Chromosome"/>
</dbReference>
<dbReference type="GO" id="GO:1990904">
    <property type="term" value="C:ribonucleoprotein complex"/>
    <property type="evidence" value="ECO:0007669"/>
    <property type="project" value="UniProtKB-KW"/>
</dbReference>
<dbReference type="GO" id="GO:0005840">
    <property type="term" value="C:ribosome"/>
    <property type="evidence" value="ECO:0007669"/>
    <property type="project" value="UniProtKB-KW"/>
</dbReference>
<dbReference type="GO" id="GO:0019843">
    <property type="term" value="F:rRNA binding"/>
    <property type="evidence" value="ECO:0007669"/>
    <property type="project" value="UniProtKB-UniRule"/>
</dbReference>
<dbReference type="GO" id="GO:0003735">
    <property type="term" value="F:structural constituent of ribosome"/>
    <property type="evidence" value="ECO:0007669"/>
    <property type="project" value="InterPro"/>
</dbReference>
<dbReference type="GO" id="GO:0006412">
    <property type="term" value="P:translation"/>
    <property type="evidence" value="ECO:0007669"/>
    <property type="project" value="UniProtKB-UniRule"/>
</dbReference>
<dbReference type="CDD" id="cd00473">
    <property type="entry name" value="bS6"/>
    <property type="match status" value="1"/>
</dbReference>
<dbReference type="Gene3D" id="3.30.70.60">
    <property type="match status" value="1"/>
</dbReference>
<dbReference type="HAMAP" id="MF_00360">
    <property type="entry name" value="Ribosomal_bS6"/>
    <property type="match status" value="1"/>
</dbReference>
<dbReference type="InterPro" id="IPR000529">
    <property type="entry name" value="Ribosomal_bS6"/>
</dbReference>
<dbReference type="InterPro" id="IPR035980">
    <property type="entry name" value="Ribosomal_bS6_sf"/>
</dbReference>
<dbReference type="InterPro" id="IPR020814">
    <property type="entry name" value="Ribosomal_S6_plastid/chlpt"/>
</dbReference>
<dbReference type="InterPro" id="IPR014717">
    <property type="entry name" value="Transl_elong_EF1B/ribsomal_bS6"/>
</dbReference>
<dbReference type="NCBIfam" id="TIGR00166">
    <property type="entry name" value="S6"/>
    <property type="match status" value="1"/>
</dbReference>
<dbReference type="Pfam" id="PF01250">
    <property type="entry name" value="Ribosomal_S6"/>
    <property type="match status" value="1"/>
</dbReference>
<dbReference type="SUPFAM" id="SSF54995">
    <property type="entry name" value="Ribosomal protein S6"/>
    <property type="match status" value="1"/>
</dbReference>
<gene>
    <name evidence="1" type="primary">rpsF</name>
    <name type="ordered locus">UPA3_0591</name>
</gene>
<name>RS6_UREP2</name>
<evidence type="ECO:0000255" key="1">
    <source>
        <dbReference type="HAMAP-Rule" id="MF_00360"/>
    </source>
</evidence>
<evidence type="ECO:0000305" key="2"/>
<feature type="chain" id="PRO_1000079475" description="Small ribosomal subunit protein bS6">
    <location>
        <begin position="1"/>
        <end position="160"/>
    </location>
</feature>
<protein>
    <recommendedName>
        <fullName evidence="1">Small ribosomal subunit protein bS6</fullName>
    </recommendedName>
    <alternativeName>
        <fullName evidence="2">30S ribosomal protein S6</fullName>
    </alternativeName>
</protein>
<comment type="function">
    <text evidence="1">Binds together with bS18 to 16S ribosomal RNA.</text>
</comment>
<comment type="similarity">
    <text evidence="1">Belongs to the bacterial ribosomal protein bS6 family.</text>
</comment>